<dbReference type="EMBL" id="AB060151">
    <property type="protein sequence ID" value="BAB55677.1"/>
    <property type="molecule type" value="mRNA"/>
</dbReference>
<dbReference type="EMBL" id="AY029596">
    <property type="protein sequence ID" value="AAK38157.1"/>
    <property type="molecule type" value="mRNA"/>
</dbReference>
<dbReference type="EMBL" id="AF399937">
    <property type="protein sequence ID" value="AAL05528.1"/>
    <property type="molecule type" value="mRNA"/>
</dbReference>
<dbReference type="EMBL" id="AF347063">
    <property type="protein sequence ID" value="AAK32193.1"/>
    <property type="molecule type" value="mRNA"/>
</dbReference>
<dbReference type="EMBL" id="AB058849">
    <property type="protein sequence ID" value="BAB87842.1"/>
    <property type="molecule type" value="mRNA"/>
</dbReference>
<dbReference type="EMBL" id="AY562946">
    <property type="protein sequence ID" value="AAS72374.1"/>
    <property type="molecule type" value="mRNA"/>
</dbReference>
<dbReference type="EMBL" id="AK123634">
    <property type="protein sequence ID" value="BAG53926.1"/>
    <property type="molecule type" value="mRNA"/>
</dbReference>
<dbReference type="EMBL" id="AL590725">
    <property type="status" value="NOT_ANNOTATED_CDS"/>
    <property type="molecule type" value="Genomic_DNA"/>
</dbReference>
<dbReference type="EMBL" id="CH471051">
    <property type="protein sequence ID" value="EAW48460.1"/>
    <property type="molecule type" value="Genomic_DNA"/>
</dbReference>
<dbReference type="EMBL" id="BC095515">
    <property type="protein sequence ID" value="AAH95515.1"/>
    <property type="molecule type" value="mRNA"/>
</dbReference>
<dbReference type="CCDS" id="CCDS5044.1"/>
<dbReference type="PIR" id="JC7695">
    <property type="entry name" value="JC7695"/>
</dbReference>
<dbReference type="RefSeq" id="NP_001035269.1">
    <property type="nucleotide sequence ID" value="NM_001040179.2"/>
</dbReference>
<dbReference type="RefSeq" id="NP_115892.2">
    <property type="nucleotide sequence ID" value="NM_032503.3"/>
</dbReference>
<dbReference type="RefSeq" id="XP_024302339.1">
    <property type="nucleotide sequence ID" value="XM_024446571.2"/>
</dbReference>
<dbReference type="RefSeq" id="XP_054212535.1">
    <property type="nucleotide sequence ID" value="XM_054356560.1"/>
</dbReference>
<dbReference type="PDB" id="8WST">
    <property type="method" value="EM"/>
    <property type="resolution" value="2.40 A"/>
    <property type="chains" value="R=1-331"/>
</dbReference>
<dbReference type="PDBsum" id="8WST"/>
<dbReference type="EMDB" id="EMD-37824"/>
<dbReference type="SMR" id="Q969V1"/>
<dbReference type="BioGRID" id="124126">
    <property type="interactions" value="1"/>
</dbReference>
<dbReference type="FunCoup" id="Q969V1">
    <property type="interactions" value="722"/>
</dbReference>
<dbReference type="STRING" id="9606.ENSP00000281806"/>
<dbReference type="BindingDB" id="Q969V1"/>
<dbReference type="ChEMBL" id="CHEMBL5038"/>
<dbReference type="GuidetoPHARMACOLOGY" id="281"/>
<dbReference type="GlyCosmos" id="Q969V1">
    <property type="glycosylation" value="2 sites, No reported glycans"/>
</dbReference>
<dbReference type="GlyGen" id="Q969V1">
    <property type="glycosylation" value="2 sites"/>
</dbReference>
<dbReference type="BioMuta" id="MCHR2"/>
<dbReference type="DMDM" id="34098673"/>
<dbReference type="MassIVE" id="Q969V1"/>
<dbReference type="PaxDb" id="9606-ENSP00000281806"/>
<dbReference type="ProteomicsDB" id="75849"/>
<dbReference type="Antibodypedia" id="32028">
    <property type="antibodies" value="196 antibodies from 28 providers"/>
</dbReference>
<dbReference type="DNASU" id="84539"/>
<dbReference type="Ensembl" id="ENST00000281806.7">
    <property type="protein sequence ID" value="ENSP00000281806.2"/>
    <property type="gene ID" value="ENSG00000152034.11"/>
</dbReference>
<dbReference type="Ensembl" id="ENST00000369212.2">
    <property type="protein sequence ID" value="ENSP00000358214.1"/>
    <property type="gene ID" value="ENSG00000152034.11"/>
</dbReference>
<dbReference type="GeneID" id="84539"/>
<dbReference type="KEGG" id="hsa:84539"/>
<dbReference type="MANE-Select" id="ENST00000281806.7">
    <property type="protein sequence ID" value="ENSP00000281806.2"/>
    <property type="RefSeq nucleotide sequence ID" value="NM_001040179.2"/>
    <property type="RefSeq protein sequence ID" value="NP_001035269.1"/>
</dbReference>
<dbReference type="UCSC" id="uc003pqh.1">
    <property type="organism name" value="human"/>
</dbReference>
<dbReference type="AGR" id="HGNC:20867"/>
<dbReference type="CTD" id="84539"/>
<dbReference type="DisGeNET" id="84539"/>
<dbReference type="GeneCards" id="MCHR2"/>
<dbReference type="HGNC" id="HGNC:20867">
    <property type="gene designation" value="MCHR2"/>
</dbReference>
<dbReference type="HPA" id="ENSG00000152034">
    <property type="expression patterns" value="Group enriched (brain, testis)"/>
</dbReference>
<dbReference type="MIM" id="606111">
    <property type="type" value="gene"/>
</dbReference>
<dbReference type="neXtProt" id="NX_Q969V1"/>
<dbReference type="OpenTargets" id="ENSG00000152034"/>
<dbReference type="PharmGKB" id="PA134950856"/>
<dbReference type="VEuPathDB" id="HostDB:ENSG00000152034"/>
<dbReference type="eggNOG" id="KOG3656">
    <property type="taxonomic scope" value="Eukaryota"/>
</dbReference>
<dbReference type="GeneTree" id="ENSGT00940000154272"/>
<dbReference type="HOGENOM" id="CLU_009579_8_1_1"/>
<dbReference type="InParanoid" id="Q969V1"/>
<dbReference type="OMA" id="FLIHQWV"/>
<dbReference type="OrthoDB" id="6076970at2759"/>
<dbReference type="PAN-GO" id="Q969V1">
    <property type="GO annotations" value="3 GO annotations based on evolutionary models"/>
</dbReference>
<dbReference type="PhylomeDB" id="Q969V1"/>
<dbReference type="TreeFam" id="TF315737"/>
<dbReference type="PathwayCommons" id="Q969V1"/>
<dbReference type="Reactome" id="R-HSA-375276">
    <property type="pathway name" value="Peptide ligand-binding receptors"/>
</dbReference>
<dbReference type="Reactome" id="R-HSA-416476">
    <property type="pathway name" value="G alpha (q) signalling events"/>
</dbReference>
<dbReference type="Reactome" id="R-HSA-418594">
    <property type="pathway name" value="G alpha (i) signalling events"/>
</dbReference>
<dbReference type="SignaLink" id="Q969V1"/>
<dbReference type="SIGNOR" id="Q969V1"/>
<dbReference type="BioGRID-ORCS" id="84539">
    <property type="hits" value="11 hits in 1136 CRISPR screens"/>
</dbReference>
<dbReference type="GeneWiki" id="Melanin-concentrating_hormone_receptor_2"/>
<dbReference type="GenomeRNAi" id="84539"/>
<dbReference type="Pharos" id="Q969V1">
    <property type="development level" value="Tchem"/>
</dbReference>
<dbReference type="PRO" id="PR:Q969V1"/>
<dbReference type="Proteomes" id="UP000005640">
    <property type="component" value="Chromosome 6"/>
</dbReference>
<dbReference type="RNAct" id="Q969V1">
    <property type="molecule type" value="protein"/>
</dbReference>
<dbReference type="Bgee" id="ENSG00000152034">
    <property type="expression patterns" value="Expressed in prefrontal cortex and 30 other cell types or tissues"/>
</dbReference>
<dbReference type="GO" id="GO:0005886">
    <property type="term" value="C:plasma membrane"/>
    <property type="evidence" value="ECO:0000318"/>
    <property type="project" value="GO_Central"/>
</dbReference>
<dbReference type="GO" id="GO:0008528">
    <property type="term" value="F:G protein-coupled peptide receptor activity"/>
    <property type="evidence" value="ECO:0000318"/>
    <property type="project" value="GO_Central"/>
</dbReference>
<dbReference type="GO" id="GO:0007218">
    <property type="term" value="P:neuropeptide signaling pathway"/>
    <property type="evidence" value="ECO:0000318"/>
    <property type="project" value="GO_Central"/>
</dbReference>
<dbReference type="CDD" id="cd15339">
    <property type="entry name" value="7tmA_MCHR2"/>
    <property type="match status" value="1"/>
</dbReference>
<dbReference type="FunFam" id="1.20.1070.10:FF:000218">
    <property type="entry name" value="melanin-concentrating hormone receptor 2"/>
    <property type="match status" value="1"/>
</dbReference>
<dbReference type="Gene3D" id="1.20.1070.10">
    <property type="entry name" value="Rhodopsin 7-helix transmembrane proteins"/>
    <property type="match status" value="1"/>
</dbReference>
<dbReference type="InterPro" id="IPR000276">
    <property type="entry name" value="GPCR_Rhodpsn"/>
</dbReference>
<dbReference type="InterPro" id="IPR017452">
    <property type="entry name" value="GPCR_Rhodpsn_7TM"/>
</dbReference>
<dbReference type="InterPro" id="IPR008361">
    <property type="entry name" value="MCH_rcpt"/>
</dbReference>
<dbReference type="InterPro" id="IPR008362">
    <property type="entry name" value="MCHR2"/>
</dbReference>
<dbReference type="PANTHER" id="PTHR24229:SF88">
    <property type="entry name" value="MELANIN-CONCENTRATING HORMONE RECEPTOR 2-RELATED"/>
    <property type="match status" value="1"/>
</dbReference>
<dbReference type="PANTHER" id="PTHR24229">
    <property type="entry name" value="NEUROPEPTIDES RECEPTOR"/>
    <property type="match status" value="1"/>
</dbReference>
<dbReference type="Pfam" id="PF00001">
    <property type="entry name" value="7tm_1"/>
    <property type="match status" value="1"/>
</dbReference>
<dbReference type="PRINTS" id="PR00237">
    <property type="entry name" value="GPCRRHODOPSN"/>
</dbReference>
<dbReference type="PRINTS" id="PR01784">
    <property type="entry name" value="MCH2RECEPTOR"/>
</dbReference>
<dbReference type="PRINTS" id="PR01783">
    <property type="entry name" value="MCHRECEPTOR"/>
</dbReference>
<dbReference type="SUPFAM" id="SSF81321">
    <property type="entry name" value="Family A G protein-coupled receptor-like"/>
    <property type="match status" value="1"/>
</dbReference>
<dbReference type="PROSITE" id="PS00237">
    <property type="entry name" value="G_PROTEIN_RECEP_F1_1"/>
    <property type="match status" value="1"/>
</dbReference>
<dbReference type="PROSITE" id="PS50262">
    <property type="entry name" value="G_PROTEIN_RECEP_F1_2"/>
    <property type="match status" value="1"/>
</dbReference>
<feature type="chain" id="PRO_0000069740" description="Melanin-concentrating hormone receptor 2">
    <location>
        <begin position="1"/>
        <end position="340"/>
    </location>
</feature>
<feature type="topological domain" description="Extracellular" evidence="1">
    <location>
        <begin position="1"/>
        <end position="39"/>
    </location>
</feature>
<feature type="transmembrane region" description="Helical; Name=1" evidence="1">
    <location>
        <begin position="40"/>
        <end position="60"/>
    </location>
</feature>
<feature type="topological domain" description="Cytoplasmic" evidence="1">
    <location>
        <begin position="61"/>
        <end position="69"/>
    </location>
</feature>
<feature type="transmembrane region" description="Helical; Name=2" evidence="1">
    <location>
        <begin position="70"/>
        <end position="90"/>
    </location>
</feature>
<feature type="topological domain" description="Extracellular" evidence="1">
    <location>
        <begin position="91"/>
        <end position="104"/>
    </location>
</feature>
<feature type="transmembrane region" description="Helical; Name=3" evidence="1">
    <location>
        <begin position="105"/>
        <end position="129"/>
    </location>
</feature>
<feature type="topological domain" description="Cytoplasmic" evidence="1">
    <location>
        <begin position="130"/>
        <end position="154"/>
    </location>
</feature>
<feature type="transmembrane region" description="Helical; Name=4" evidence="1">
    <location>
        <begin position="155"/>
        <end position="175"/>
    </location>
</feature>
<feature type="topological domain" description="Extracellular" evidence="1">
    <location>
        <begin position="176"/>
        <end position="200"/>
    </location>
</feature>
<feature type="transmembrane region" description="Helical; Name=5" evidence="1">
    <location>
        <begin position="201"/>
        <end position="221"/>
    </location>
</feature>
<feature type="topological domain" description="Cytoplasmic" evidence="1">
    <location>
        <begin position="222"/>
        <end position="252"/>
    </location>
</feature>
<feature type="transmembrane region" description="Helical; Name=6" evidence="1">
    <location>
        <begin position="253"/>
        <end position="273"/>
    </location>
</feature>
<feature type="topological domain" description="Extracellular" evidence="1">
    <location>
        <begin position="274"/>
        <end position="288"/>
    </location>
</feature>
<feature type="transmembrane region" description="Helical; Name=7" evidence="1">
    <location>
        <begin position="289"/>
        <end position="309"/>
    </location>
</feature>
<feature type="topological domain" description="Cytoplasmic" evidence="1">
    <location>
        <begin position="310"/>
        <end position="340"/>
    </location>
</feature>
<feature type="glycosylation site" description="N-linked (GlcNAc...) asparagine" evidence="1">
    <location>
        <position position="10"/>
    </location>
</feature>
<feature type="glycosylation site" description="N-linked (GlcNAc...) asparagine" evidence="1">
    <location>
        <position position="17"/>
    </location>
</feature>
<feature type="sequence variant" id="VAR_026661" description="No changes in receptor binding or functional signaling; dbSNP:rs147988902." evidence="3">
    <original>R</original>
    <variation>K</variation>
    <location>
        <position position="63"/>
    </location>
</feature>
<feature type="sequence variant" id="VAR_026662" description="No changes in receptor binding or functional signaling; dbSNP:rs62434070." evidence="3">
    <original>R</original>
    <variation>Q</variation>
    <location>
        <position position="152"/>
    </location>
</feature>
<feature type="helix" evidence="4">
    <location>
        <begin position="32"/>
        <end position="61"/>
    </location>
</feature>
<feature type="helix" evidence="4">
    <location>
        <begin position="67"/>
        <end position="84"/>
    </location>
</feature>
<feature type="helix" evidence="4">
    <location>
        <begin position="86"/>
        <end position="95"/>
    </location>
</feature>
<feature type="helix" evidence="4">
    <location>
        <begin position="103"/>
        <end position="136"/>
    </location>
</feature>
<feature type="turn" evidence="4">
    <location>
        <begin position="138"/>
        <end position="140"/>
    </location>
</feature>
<feature type="helix" evidence="4">
    <location>
        <begin position="143"/>
        <end position="145"/>
    </location>
</feature>
<feature type="helix" evidence="4">
    <location>
        <begin position="147"/>
        <end position="164"/>
    </location>
</feature>
<feature type="helix" evidence="4">
    <location>
        <begin position="166"/>
        <end position="171"/>
    </location>
</feature>
<feature type="strand" evidence="4">
    <location>
        <begin position="172"/>
        <end position="175"/>
    </location>
</feature>
<feature type="helix" evidence="4">
    <location>
        <begin position="178"/>
        <end position="180"/>
    </location>
</feature>
<feature type="strand" evidence="4">
    <location>
        <begin position="183"/>
        <end position="187"/>
    </location>
</feature>
<feature type="helix" evidence="4">
    <location>
        <begin position="191"/>
        <end position="205"/>
    </location>
</feature>
<feature type="turn" evidence="4">
    <location>
        <begin position="206"/>
        <end position="208"/>
    </location>
</feature>
<feature type="helix" evidence="4">
    <location>
        <begin position="209"/>
        <end position="230"/>
    </location>
</feature>
<feature type="helix" evidence="4">
    <location>
        <begin position="231"/>
        <end position="234"/>
    </location>
</feature>
<feature type="strand" evidence="4">
    <location>
        <begin position="236"/>
        <end position="239"/>
    </location>
</feature>
<feature type="helix" evidence="4">
    <location>
        <begin position="248"/>
        <end position="250"/>
    </location>
</feature>
<feature type="helix" evidence="4">
    <location>
        <begin position="251"/>
        <end position="275"/>
    </location>
</feature>
<feature type="helix" evidence="4">
    <location>
        <begin position="282"/>
        <end position="295"/>
    </location>
</feature>
<feature type="helix" evidence="4">
    <location>
        <begin position="297"/>
        <end position="307"/>
    </location>
</feature>
<feature type="strand" evidence="4">
    <location>
        <begin position="310"/>
        <end position="312"/>
    </location>
</feature>
<feature type="helix" evidence="4">
    <location>
        <begin position="314"/>
        <end position="316"/>
    </location>
</feature>
<gene>
    <name type="primary">MCHR2</name>
    <name type="synonym">GPR145</name>
    <name type="synonym">SLT</name>
</gene>
<keyword id="KW-0002">3D-structure</keyword>
<keyword id="KW-1003">Cell membrane</keyword>
<keyword id="KW-0297">G-protein coupled receptor</keyword>
<keyword id="KW-0325">Glycoprotein</keyword>
<keyword id="KW-0472">Membrane</keyword>
<keyword id="KW-0675">Receptor</keyword>
<keyword id="KW-1185">Reference proteome</keyword>
<keyword id="KW-0807">Transducer</keyword>
<keyword id="KW-0812">Transmembrane</keyword>
<keyword id="KW-1133">Transmembrane helix</keyword>
<sequence length="340" mass="38849">MNPFHASCWNTSAELLNKSWNKEFAYQTASVVDTVILPSMIGIICSTGLVGNILIVFTIIRSRKKTVPDIYICNLAVADLVHIVGMPFLIHQWARGGEWVFGGPLCTIITSLDTCNQFACSAIMTVMSVDRYFALVQPFRLTRWRTRYKTIRINLGLWAASFILALPVWVYSKVIKFKDGVESCAFDLTSPDDVLWYTLYLTITTFFFPLPLILVCYILILCYTWEMYQQNKDARCCNPSVPKQRVMKLTKMVLVLVVVFILSAAPYHVIQLVNLQMEQPTLAFYVGYYLSICLSYASSSINPFLYILLSGNFQKRLPQIQRRATEKEINNMGNTLKSHF</sequence>
<name>MCHR2_HUMAN</name>
<protein>
    <recommendedName>
        <fullName>Melanin-concentrating hormone receptor 2</fullName>
        <shortName>MCH receptor 2</shortName>
        <shortName>MCH-R2</shortName>
        <shortName>MCHR-2</shortName>
    </recommendedName>
    <alternativeName>
        <fullName>G-protein coupled receptor 145</fullName>
    </alternativeName>
    <alternativeName>
        <fullName>GPRv17</fullName>
    </alternativeName>
    <alternativeName>
        <fullName>MCH-2R</fullName>
        <shortName>MCH2</shortName>
        <shortName>MCH2R</shortName>
    </alternativeName>
</protein>
<evidence type="ECO:0000255" key="1"/>
<evidence type="ECO:0000255" key="2">
    <source>
        <dbReference type="PROSITE-ProRule" id="PRU00521"/>
    </source>
</evidence>
<evidence type="ECO:0000269" key="3">
    <source>
    </source>
</evidence>
<evidence type="ECO:0007829" key="4">
    <source>
        <dbReference type="PDB" id="8WST"/>
    </source>
</evidence>
<reference key="1">
    <citation type="journal article" date="2001" name="Biochem. Biophys. Res. Commun.">
        <title>Cloning of a novel G protein-coupled receptor, SLT, a subtype of the melanin-concentrating hormone receptor.</title>
        <authorList>
            <person name="Mori M."/>
            <person name="Harada M."/>
            <person name="Terao Y."/>
            <person name="Sugo T."/>
            <person name="Watanabe T."/>
            <person name="Shimomura Y."/>
            <person name="Abe M."/>
            <person name="Shintani Y."/>
            <person name="Onda H."/>
            <person name="Nishimura O."/>
            <person name="Fujino M."/>
        </authorList>
    </citation>
    <scope>NUCLEOTIDE SEQUENCE [MRNA]</scope>
</reference>
<reference key="2">
    <citation type="journal article" date="2001" name="Proc. Natl. Acad. Sci. U.S.A.">
        <title>Identification and characterization of a second melanin-concentrating hormone receptor, MCH-2R.</title>
        <authorList>
            <person name="Sailer A.W."/>
            <person name="Sano H."/>
            <person name="Zeng Z."/>
            <person name="McDonald T.P."/>
            <person name="Pan J."/>
            <person name="Pong S.-S."/>
            <person name="Feighner S.D."/>
            <person name="Tan C.P."/>
            <person name="Fukami T."/>
            <person name="Iwaasa H."/>
            <person name="Hreniuk D.L."/>
            <person name="Morin N.R."/>
            <person name="Sadowski S.J."/>
            <person name="Ito M."/>
            <person name="Ito M."/>
            <person name="Bansal A."/>
            <person name="Ky B."/>
            <person name="Figueroa D.J."/>
            <person name="Jiang Q."/>
            <person name="Austin C.P."/>
            <person name="MacNeil D.J."/>
            <person name="Ishihara A."/>
            <person name="Ihara M."/>
            <person name="Kanatani A."/>
            <person name="Van der Ploeg L.H.T."/>
            <person name="Howard A.D."/>
            <person name="Liu Q."/>
        </authorList>
    </citation>
    <scope>NUCLEOTIDE SEQUENCE [MRNA]</scope>
    <source>
        <tissue>Fetal brain</tissue>
    </source>
</reference>
<reference key="3">
    <citation type="journal article" date="2001" name="J. Biol. Chem.">
        <title>Identification and pharmacological characterization of a novel human melanin-concentrating hormone receptor, MCH-R2.</title>
        <authorList>
            <person name="Wang S."/>
            <person name="Behan J."/>
            <person name="O'Neill K."/>
            <person name="Weig B."/>
            <person name="Fried S."/>
            <person name="Laz T."/>
            <person name="Bayne M."/>
            <person name="Gustafson E."/>
            <person name="Hawes B.E."/>
        </authorList>
    </citation>
    <scope>NUCLEOTIDE SEQUENCE [MRNA]</scope>
</reference>
<reference key="4">
    <citation type="journal article" date="2001" name="J. Biol. Chem.">
        <title>Molecular cloning and functional characterization of MCH2, a novel human MCH receptor.</title>
        <authorList>
            <person name="Hill J."/>
            <person name="Duckworth M."/>
            <person name="Murdock P."/>
            <person name="Rennie G."/>
            <person name="Sabido-David C."/>
            <person name="Ames R.S."/>
            <person name="Szekeres P."/>
            <person name="Wilson S."/>
            <person name="Bergsma D.J."/>
            <person name="Gloger I.S."/>
            <person name="Levy D.S."/>
            <person name="Chambers J.K."/>
            <person name="Muir A.I."/>
        </authorList>
    </citation>
    <scope>NUCLEOTIDE SEQUENCE [MRNA]</scope>
</reference>
<reference key="5">
    <citation type="submission" date="2001-03" db="EMBL/GenBank/DDBJ databases">
        <title>Molecular characterization of a novel melanin-concentrating hormone receptor: evidence of its expression in lateral hypothalamus.</title>
        <authorList>
            <person name="Kurama T."/>
            <person name="Matsumoto S."/>
            <person name="Takasaki J."/>
            <person name="Terai K."/>
            <person name="Matsumoto M."/>
            <person name="Kamohara M."/>
            <person name="Saito T."/>
            <person name="Soga T."/>
            <person name="Saito Y."/>
            <person name="Oda T."/>
            <person name="Masuho Y."/>
            <person name="Furuichi K."/>
        </authorList>
    </citation>
    <scope>NUCLEOTIDE SEQUENCE [MRNA]</scope>
</reference>
<reference key="6">
    <citation type="submission" date="2004-03" db="EMBL/GenBank/DDBJ databases">
        <title>cDNA clones of human proteins involved in signal transduction sequenced by the Guthrie cDNA resource center (www.cdna.org).</title>
        <authorList>
            <person name="King M.M."/>
            <person name="Aronstam R.S."/>
            <person name="Sharma S.V."/>
        </authorList>
    </citation>
    <scope>NUCLEOTIDE SEQUENCE [LARGE SCALE MRNA]</scope>
    <source>
        <tissue>Brain</tissue>
    </source>
</reference>
<reference key="7">
    <citation type="journal article" date="2004" name="Nat. Genet.">
        <title>Complete sequencing and characterization of 21,243 full-length human cDNAs.</title>
        <authorList>
            <person name="Ota T."/>
            <person name="Suzuki Y."/>
            <person name="Nishikawa T."/>
            <person name="Otsuki T."/>
            <person name="Sugiyama T."/>
            <person name="Irie R."/>
            <person name="Wakamatsu A."/>
            <person name="Hayashi K."/>
            <person name="Sato H."/>
            <person name="Nagai K."/>
            <person name="Kimura K."/>
            <person name="Makita H."/>
            <person name="Sekine M."/>
            <person name="Obayashi M."/>
            <person name="Nishi T."/>
            <person name="Shibahara T."/>
            <person name="Tanaka T."/>
            <person name="Ishii S."/>
            <person name="Yamamoto J."/>
            <person name="Saito K."/>
            <person name="Kawai Y."/>
            <person name="Isono Y."/>
            <person name="Nakamura Y."/>
            <person name="Nagahari K."/>
            <person name="Murakami K."/>
            <person name="Yasuda T."/>
            <person name="Iwayanagi T."/>
            <person name="Wagatsuma M."/>
            <person name="Shiratori A."/>
            <person name="Sudo H."/>
            <person name="Hosoiri T."/>
            <person name="Kaku Y."/>
            <person name="Kodaira H."/>
            <person name="Kondo H."/>
            <person name="Sugawara M."/>
            <person name="Takahashi M."/>
            <person name="Kanda K."/>
            <person name="Yokoi T."/>
            <person name="Furuya T."/>
            <person name="Kikkawa E."/>
            <person name="Omura Y."/>
            <person name="Abe K."/>
            <person name="Kamihara K."/>
            <person name="Katsuta N."/>
            <person name="Sato K."/>
            <person name="Tanikawa M."/>
            <person name="Yamazaki M."/>
            <person name="Ninomiya K."/>
            <person name="Ishibashi T."/>
            <person name="Yamashita H."/>
            <person name="Murakawa K."/>
            <person name="Fujimori K."/>
            <person name="Tanai H."/>
            <person name="Kimata M."/>
            <person name="Watanabe M."/>
            <person name="Hiraoka S."/>
            <person name="Chiba Y."/>
            <person name="Ishida S."/>
            <person name="Ono Y."/>
            <person name="Takiguchi S."/>
            <person name="Watanabe S."/>
            <person name="Yosida M."/>
            <person name="Hotuta T."/>
            <person name="Kusano J."/>
            <person name="Kanehori K."/>
            <person name="Takahashi-Fujii A."/>
            <person name="Hara H."/>
            <person name="Tanase T.-O."/>
            <person name="Nomura Y."/>
            <person name="Togiya S."/>
            <person name="Komai F."/>
            <person name="Hara R."/>
            <person name="Takeuchi K."/>
            <person name="Arita M."/>
            <person name="Imose N."/>
            <person name="Musashino K."/>
            <person name="Yuuki H."/>
            <person name="Oshima A."/>
            <person name="Sasaki N."/>
            <person name="Aotsuka S."/>
            <person name="Yoshikawa Y."/>
            <person name="Matsunawa H."/>
            <person name="Ichihara T."/>
            <person name="Shiohata N."/>
            <person name="Sano S."/>
            <person name="Moriya S."/>
            <person name="Momiyama H."/>
            <person name="Satoh N."/>
            <person name="Takami S."/>
            <person name="Terashima Y."/>
            <person name="Suzuki O."/>
            <person name="Nakagawa S."/>
            <person name="Senoh A."/>
            <person name="Mizoguchi H."/>
            <person name="Goto Y."/>
            <person name="Shimizu F."/>
            <person name="Wakebe H."/>
            <person name="Hishigaki H."/>
            <person name="Watanabe T."/>
            <person name="Sugiyama A."/>
            <person name="Takemoto M."/>
            <person name="Kawakami B."/>
            <person name="Yamazaki M."/>
            <person name="Watanabe K."/>
            <person name="Kumagai A."/>
            <person name="Itakura S."/>
            <person name="Fukuzumi Y."/>
            <person name="Fujimori Y."/>
            <person name="Komiyama M."/>
            <person name="Tashiro H."/>
            <person name="Tanigami A."/>
            <person name="Fujiwara T."/>
            <person name="Ono T."/>
            <person name="Yamada K."/>
            <person name="Fujii Y."/>
            <person name="Ozaki K."/>
            <person name="Hirao M."/>
            <person name="Ohmori Y."/>
            <person name="Kawabata A."/>
            <person name="Hikiji T."/>
            <person name="Kobatake N."/>
            <person name="Inagaki H."/>
            <person name="Ikema Y."/>
            <person name="Okamoto S."/>
            <person name="Okitani R."/>
            <person name="Kawakami T."/>
            <person name="Noguchi S."/>
            <person name="Itoh T."/>
            <person name="Shigeta K."/>
            <person name="Senba T."/>
            <person name="Matsumura K."/>
            <person name="Nakajima Y."/>
            <person name="Mizuno T."/>
            <person name="Morinaga M."/>
            <person name="Sasaki M."/>
            <person name="Togashi T."/>
            <person name="Oyama M."/>
            <person name="Hata H."/>
            <person name="Watanabe M."/>
            <person name="Komatsu T."/>
            <person name="Mizushima-Sugano J."/>
            <person name="Satoh T."/>
            <person name="Shirai Y."/>
            <person name="Takahashi Y."/>
            <person name="Nakagawa K."/>
            <person name="Okumura K."/>
            <person name="Nagase T."/>
            <person name="Nomura N."/>
            <person name="Kikuchi H."/>
            <person name="Masuho Y."/>
            <person name="Yamashita R."/>
            <person name="Nakai K."/>
            <person name="Yada T."/>
            <person name="Nakamura Y."/>
            <person name="Ohara O."/>
            <person name="Isogai T."/>
            <person name="Sugano S."/>
        </authorList>
    </citation>
    <scope>NUCLEOTIDE SEQUENCE [LARGE SCALE MRNA]</scope>
    <source>
        <tissue>Brain</tissue>
    </source>
</reference>
<reference key="8">
    <citation type="journal article" date="2003" name="Nature">
        <title>The DNA sequence and analysis of human chromosome 6.</title>
        <authorList>
            <person name="Mungall A.J."/>
            <person name="Palmer S.A."/>
            <person name="Sims S.K."/>
            <person name="Edwards C.A."/>
            <person name="Ashurst J.L."/>
            <person name="Wilming L."/>
            <person name="Jones M.C."/>
            <person name="Horton R."/>
            <person name="Hunt S.E."/>
            <person name="Scott C.E."/>
            <person name="Gilbert J.G.R."/>
            <person name="Clamp M.E."/>
            <person name="Bethel G."/>
            <person name="Milne S."/>
            <person name="Ainscough R."/>
            <person name="Almeida J.P."/>
            <person name="Ambrose K.D."/>
            <person name="Andrews T.D."/>
            <person name="Ashwell R.I.S."/>
            <person name="Babbage A.K."/>
            <person name="Bagguley C.L."/>
            <person name="Bailey J."/>
            <person name="Banerjee R."/>
            <person name="Barker D.J."/>
            <person name="Barlow K.F."/>
            <person name="Bates K."/>
            <person name="Beare D.M."/>
            <person name="Beasley H."/>
            <person name="Beasley O."/>
            <person name="Bird C.P."/>
            <person name="Blakey S.E."/>
            <person name="Bray-Allen S."/>
            <person name="Brook J."/>
            <person name="Brown A.J."/>
            <person name="Brown J.Y."/>
            <person name="Burford D.C."/>
            <person name="Burrill W."/>
            <person name="Burton J."/>
            <person name="Carder C."/>
            <person name="Carter N.P."/>
            <person name="Chapman J.C."/>
            <person name="Clark S.Y."/>
            <person name="Clark G."/>
            <person name="Clee C.M."/>
            <person name="Clegg S."/>
            <person name="Cobley V."/>
            <person name="Collier R.E."/>
            <person name="Collins J.E."/>
            <person name="Colman L.K."/>
            <person name="Corby N.R."/>
            <person name="Coville G.J."/>
            <person name="Culley K.M."/>
            <person name="Dhami P."/>
            <person name="Davies J."/>
            <person name="Dunn M."/>
            <person name="Earthrowl M.E."/>
            <person name="Ellington A.E."/>
            <person name="Evans K.A."/>
            <person name="Faulkner L."/>
            <person name="Francis M.D."/>
            <person name="Frankish A."/>
            <person name="Frankland J."/>
            <person name="French L."/>
            <person name="Garner P."/>
            <person name="Garnett J."/>
            <person name="Ghori M.J."/>
            <person name="Gilby L.M."/>
            <person name="Gillson C.J."/>
            <person name="Glithero R.J."/>
            <person name="Grafham D.V."/>
            <person name="Grant M."/>
            <person name="Gribble S."/>
            <person name="Griffiths C."/>
            <person name="Griffiths M.N.D."/>
            <person name="Hall R."/>
            <person name="Halls K.S."/>
            <person name="Hammond S."/>
            <person name="Harley J.L."/>
            <person name="Hart E.A."/>
            <person name="Heath P.D."/>
            <person name="Heathcott R."/>
            <person name="Holmes S.J."/>
            <person name="Howden P.J."/>
            <person name="Howe K.L."/>
            <person name="Howell G.R."/>
            <person name="Huckle E."/>
            <person name="Humphray S.J."/>
            <person name="Humphries M.D."/>
            <person name="Hunt A.R."/>
            <person name="Johnson C.M."/>
            <person name="Joy A.A."/>
            <person name="Kay M."/>
            <person name="Keenan S.J."/>
            <person name="Kimberley A.M."/>
            <person name="King A."/>
            <person name="Laird G.K."/>
            <person name="Langford C."/>
            <person name="Lawlor S."/>
            <person name="Leongamornlert D.A."/>
            <person name="Leversha M."/>
            <person name="Lloyd C.R."/>
            <person name="Lloyd D.M."/>
            <person name="Loveland J.E."/>
            <person name="Lovell J."/>
            <person name="Martin S."/>
            <person name="Mashreghi-Mohammadi M."/>
            <person name="Maslen G.L."/>
            <person name="Matthews L."/>
            <person name="McCann O.T."/>
            <person name="McLaren S.J."/>
            <person name="McLay K."/>
            <person name="McMurray A."/>
            <person name="Moore M.J.F."/>
            <person name="Mullikin J.C."/>
            <person name="Niblett D."/>
            <person name="Nickerson T."/>
            <person name="Novik K.L."/>
            <person name="Oliver K."/>
            <person name="Overton-Larty E.K."/>
            <person name="Parker A."/>
            <person name="Patel R."/>
            <person name="Pearce A.V."/>
            <person name="Peck A.I."/>
            <person name="Phillimore B.J.C.T."/>
            <person name="Phillips S."/>
            <person name="Plumb R.W."/>
            <person name="Porter K.M."/>
            <person name="Ramsey Y."/>
            <person name="Ranby S.A."/>
            <person name="Rice C.M."/>
            <person name="Ross M.T."/>
            <person name="Searle S.M."/>
            <person name="Sehra H.K."/>
            <person name="Sheridan E."/>
            <person name="Skuce C.D."/>
            <person name="Smith S."/>
            <person name="Smith M."/>
            <person name="Spraggon L."/>
            <person name="Squares S.L."/>
            <person name="Steward C.A."/>
            <person name="Sycamore N."/>
            <person name="Tamlyn-Hall G."/>
            <person name="Tester J."/>
            <person name="Theaker A.J."/>
            <person name="Thomas D.W."/>
            <person name="Thorpe A."/>
            <person name="Tracey A."/>
            <person name="Tromans A."/>
            <person name="Tubby B."/>
            <person name="Wall M."/>
            <person name="Wallis J.M."/>
            <person name="West A.P."/>
            <person name="White S.S."/>
            <person name="Whitehead S.L."/>
            <person name="Whittaker H."/>
            <person name="Wild A."/>
            <person name="Willey D.J."/>
            <person name="Wilmer T.E."/>
            <person name="Wood J.M."/>
            <person name="Wray P.W."/>
            <person name="Wyatt J.C."/>
            <person name="Young L."/>
            <person name="Younger R.M."/>
            <person name="Bentley D.R."/>
            <person name="Coulson A."/>
            <person name="Durbin R.M."/>
            <person name="Hubbard T."/>
            <person name="Sulston J.E."/>
            <person name="Dunham I."/>
            <person name="Rogers J."/>
            <person name="Beck S."/>
        </authorList>
    </citation>
    <scope>NUCLEOTIDE SEQUENCE [LARGE SCALE GENOMIC DNA]</scope>
</reference>
<reference key="9">
    <citation type="submission" date="2005-09" db="EMBL/GenBank/DDBJ databases">
        <authorList>
            <person name="Mural R.J."/>
            <person name="Istrail S."/>
            <person name="Sutton G.G."/>
            <person name="Florea L."/>
            <person name="Halpern A.L."/>
            <person name="Mobarry C.M."/>
            <person name="Lippert R."/>
            <person name="Walenz B."/>
            <person name="Shatkay H."/>
            <person name="Dew I."/>
            <person name="Miller J.R."/>
            <person name="Flanigan M.J."/>
            <person name="Edwards N.J."/>
            <person name="Bolanos R."/>
            <person name="Fasulo D."/>
            <person name="Halldorsson B.V."/>
            <person name="Hannenhalli S."/>
            <person name="Turner R."/>
            <person name="Yooseph S."/>
            <person name="Lu F."/>
            <person name="Nusskern D.R."/>
            <person name="Shue B.C."/>
            <person name="Zheng X.H."/>
            <person name="Zhong F."/>
            <person name="Delcher A.L."/>
            <person name="Huson D.H."/>
            <person name="Kravitz S.A."/>
            <person name="Mouchard L."/>
            <person name="Reinert K."/>
            <person name="Remington K.A."/>
            <person name="Clark A.G."/>
            <person name="Waterman M.S."/>
            <person name="Eichler E.E."/>
            <person name="Adams M.D."/>
            <person name="Hunkapiller M.W."/>
            <person name="Myers E.W."/>
            <person name="Venter J.C."/>
        </authorList>
    </citation>
    <scope>NUCLEOTIDE SEQUENCE [LARGE SCALE GENOMIC DNA]</scope>
</reference>
<reference key="10">
    <citation type="journal article" date="2004" name="Genome Res.">
        <title>The status, quality, and expansion of the NIH full-length cDNA project: the Mammalian Gene Collection (MGC).</title>
        <authorList>
            <consortium name="The MGC Project Team"/>
        </authorList>
    </citation>
    <scope>NUCLEOTIDE SEQUENCE [LARGE SCALE MRNA]</scope>
</reference>
<reference key="11">
    <citation type="journal article" date="2004" name="Obes. Res.">
        <title>Identification and characterization of single-nucleotide polymorphisms in MCH-R1 and MCH-R2.</title>
        <authorList>
            <person name="Hawes B.E."/>
            <person name="Green B."/>
            <person name="O'Neill K."/>
            <person name="Fried S."/>
            <person name="Arreaza M.G."/>
            <person name="Qiu P."/>
            <person name="Simon J.S."/>
        </authorList>
    </citation>
    <scope>VARIANTS LYS-63 AND GLN-152</scope>
    <scope>CHARACTERIZATION OF VARIANTS LYS-63 AND GLN-152</scope>
</reference>
<comment type="function">
    <text>Receptor for melanin-concentrating hormone, coupled to G proteins that activate phosphoinositide hydrolysis.</text>
</comment>
<comment type="subcellular location">
    <subcellularLocation>
        <location>Cell membrane</location>
        <topology>Multi-pass membrane protein</topology>
    </subcellularLocation>
</comment>
<comment type="tissue specificity">
    <text>Specifically expressed in the brain, with highest levels in cerebral cortex, hippocampus and amygdala. No expression detected in the cerebellum, thalamus or hypothalamus.</text>
</comment>
<comment type="similarity">
    <text evidence="2">Belongs to the G-protein coupled receptor 1 family.</text>
</comment>
<proteinExistence type="evidence at protein level"/>
<organism>
    <name type="scientific">Homo sapiens</name>
    <name type="common">Human</name>
    <dbReference type="NCBI Taxonomy" id="9606"/>
    <lineage>
        <taxon>Eukaryota</taxon>
        <taxon>Metazoa</taxon>
        <taxon>Chordata</taxon>
        <taxon>Craniata</taxon>
        <taxon>Vertebrata</taxon>
        <taxon>Euteleostomi</taxon>
        <taxon>Mammalia</taxon>
        <taxon>Eutheria</taxon>
        <taxon>Euarchontoglires</taxon>
        <taxon>Primates</taxon>
        <taxon>Haplorrhini</taxon>
        <taxon>Catarrhini</taxon>
        <taxon>Hominidae</taxon>
        <taxon>Homo</taxon>
    </lineage>
</organism>
<accession>Q969V1</accession>
<accession>B3KVW4</accession>
<accession>E1P5D7</accession>
<accession>Q5VTV7</accession>
<accession>Q6Q377</accession>
<accession>Q9BXA8</accession>